<reference key="1">
    <citation type="journal article" date="2011" name="Appl. Environ. Microbiol.">
        <title>Genomic potential of Marinobacter aquaeolei, a biogeochemical 'opportunitroph'.</title>
        <authorList>
            <person name="Singer E."/>
            <person name="Webb E.A."/>
            <person name="Nelson W.C."/>
            <person name="Heidelberg J.F."/>
            <person name="Ivanova N."/>
            <person name="Pati A."/>
            <person name="Edwards K.J."/>
        </authorList>
    </citation>
    <scope>NUCLEOTIDE SEQUENCE [LARGE SCALE GENOMIC DNA]</scope>
    <source>
        <strain>ATCC 700491 / DSM 11845 / VT8</strain>
    </source>
</reference>
<comment type="function">
    <text evidence="1">Involved in the de novo purine biosynthesis. Catalyzes the transfer of formate to 5-phospho-ribosyl-glycinamide (GAR), producing 5-phospho-ribosyl-N-formylglycinamide (FGAR). Formate is provided by PurU via hydrolysis of 10-formyl-tetrahydrofolate.</text>
</comment>
<comment type="catalytic activity">
    <reaction evidence="1">
        <text>N(1)-(5-phospho-beta-D-ribosyl)glycinamide + formate + ATP = N(2)-formyl-N(1)-(5-phospho-beta-D-ribosyl)glycinamide + ADP + phosphate + H(+)</text>
        <dbReference type="Rhea" id="RHEA:24829"/>
        <dbReference type="ChEBI" id="CHEBI:15378"/>
        <dbReference type="ChEBI" id="CHEBI:15740"/>
        <dbReference type="ChEBI" id="CHEBI:30616"/>
        <dbReference type="ChEBI" id="CHEBI:43474"/>
        <dbReference type="ChEBI" id="CHEBI:143788"/>
        <dbReference type="ChEBI" id="CHEBI:147286"/>
        <dbReference type="ChEBI" id="CHEBI:456216"/>
        <dbReference type="EC" id="6.3.1.21"/>
    </reaction>
    <physiologicalReaction direction="left-to-right" evidence="1">
        <dbReference type="Rhea" id="RHEA:24830"/>
    </physiologicalReaction>
</comment>
<comment type="pathway">
    <text evidence="1">Purine metabolism; IMP biosynthesis via de novo pathway; N(2)-formyl-N(1)-(5-phospho-D-ribosyl)glycinamide from N(1)-(5-phospho-D-ribosyl)glycinamide (formate route): step 1/1.</text>
</comment>
<comment type="subunit">
    <text evidence="1">Homodimer.</text>
</comment>
<comment type="similarity">
    <text evidence="1">Belongs to the PurK/PurT family.</text>
</comment>
<comment type="sequence caution" evidence="2">
    <conflict type="erroneous initiation">
        <sequence resource="EMBL-CDS" id="ABM19553"/>
    </conflict>
</comment>
<sequence length="390" mass="42705">MGTPLKSNSFRVLFCGSGELGKEVVIELQRFGVEVIAIDRYADAPAMQVAHRSHVVDMLDPVALRSVIEKERPNLIVPEIEAIATPELVKLEQEGYRVIPSARAVNLTMNREGIRRLAAEELGLPTSPYRFAGTREEYLQAVAEVGLPLVVKPVMSSSGKGQSTVKTEADIERAWEYAQTGGRAGKGRVIVEGFVDFDYEITLLTVRHKEGITFCEPIGHRQEDGDYRESWQPQPMNDLALQRSKEIARAVVEDLGGYGIYGVELFVKGENVWFSEVSPRPHDTGLVTLVSQDLSEFAIHARAILGIPVPVVRQNGPSASAVILPEGSSTEVSYTGLEEALAQPGTQLRLFGKPELQGRRRMGVALALGSSIEDAREKARTAASSIKVQF</sequence>
<feature type="chain" id="PRO_0000319185" description="Formate-dependent phosphoribosylglycinamide formyltransferase">
    <location>
        <begin position="1"/>
        <end position="390"/>
    </location>
</feature>
<feature type="domain" description="ATP-grasp" evidence="1">
    <location>
        <begin position="116"/>
        <end position="305"/>
    </location>
</feature>
<feature type="binding site" evidence="1">
    <location>
        <begin position="19"/>
        <end position="20"/>
    </location>
    <ligand>
        <name>N(1)-(5-phospho-beta-D-ribosyl)glycinamide</name>
        <dbReference type="ChEBI" id="CHEBI:143788"/>
    </ligand>
</feature>
<feature type="binding site" evidence="1">
    <location>
        <position position="79"/>
    </location>
    <ligand>
        <name>N(1)-(5-phospho-beta-D-ribosyl)glycinamide</name>
        <dbReference type="ChEBI" id="CHEBI:143788"/>
    </ligand>
</feature>
<feature type="binding site" evidence="1">
    <location>
        <position position="111"/>
    </location>
    <ligand>
        <name>ATP</name>
        <dbReference type="ChEBI" id="CHEBI:30616"/>
    </ligand>
</feature>
<feature type="binding site" evidence="1">
    <location>
        <position position="152"/>
    </location>
    <ligand>
        <name>ATP</name>
        <dbReference type="ChEBI" id="CHEBI:30616"/>
    </ligand>
</feature>
<feature type="binding site" evidence="1">
    <location>
        <begin position="157"/>
        <end position="162"/>
    </location>
    <ligand>
        <name>ATP</name>
        <dbReference type="ChEBI" id="CHEBI:30616"/>
    </ligand>
</feature>
<feature type="binding site" evidence="1">
    <location>
        <begin position="192"/>
        <end position="195"/>
    </location>
    <ligand>
        <name>ATP</name>
        <dbReference type="ChEBI" id="CHEBI:30616"/>
    </ligand>
</feature>
<feature type="binding site" evidence="1">
    <location>
        <position position="200"/>
    </location>
    <ligand>
        <name>ATP</name>
        <dbReference type="ChEBI" id="CHEBI:30616"/>
    </ligand>
</feature>
<feature type="binding site" evidence="1">
    <location>
        <position position="264"/>
    </location>
    <ligand>
        <name>Mg(2+)</name>
        <dbReference type="ChEBI" id="CHEBI:18420"/>
    </ligand>
</feature>
<feature type="binding site" evidence="1">
    <location>
        <position position="276"/>
    </location>
    <ligand>
        <name>Mg(2+)</name>
        <dbReference type="ChEBI" id="CHEBI:18420"/>
    </ligand>
</feature>
<feature type="binding site" evidence="1">
    <location>
        <position position="283"/>
    </location>
    <ligand>
        <name>N(1)-(5-phospho-beta-D-ribosyl)glycinamide</name>
        <dbReference type="ChEBI" id="CHEBI:143788"/>
    </ligand>
</feature>
<feature type="binding site" evidence="1">
    <location>
        <position position="353"/>
    </location>
    <ligand>
        <name>N(1)-(5-phospho-beta-D-ribosyl)glycinamide</name>
        <dbReference type="ChEBI" id="CHEBI:143788"/>
    </ligand>
</feature>
<feature type="binding site" evidence="1">
    <location>
        <begin position="360"/>
        <end position="361"/>
    </location>
    <ligand>
        <name>N(1)-(5-phospho-beta-D-ribosyl)glycinamide</name>
        <dbReference type="ChEBI" id="CHEBI:143788"/>
    </ligand>
</feature>
<keyword id="KW-0067">ATP-binding</keyword>
<keyword id="KW-0436">Ligase</keyword>
<keyword id="KW-0460">Magnesium</keyword>
<keyword id="KW-0479">Metal-binding</keyword>
<keyword id="KW-0547">Nucleotide-binding</keyword>
<keyword id="KW-0658">Purine biosynthesis</keyword>
<evidence type="ECO:0000255" key="1">
    <source>
        <dbReference type="HAMAP-Rule" id="MF_01643"/>
    </source>
</evidence>
<evidence type="ECO:0000305" key="2"/>
<name>PURT_MARN8</name>
<dbReference type="EC" id="6.3.1.21" evidence="1"/>
<dbReference type="EMBL" id="CP000514">
    <property type="protein sequence ID" value="ABM19553.1"/>
    <property type="status" value="ALT_INIT"/>
    <property type="molecule type" value="Genomic_DNA"/>
</dbReference>
<dbReference type="SMR" id="A1U3I4"/>
<dbReference type="STRING" id="351348.Maqu_2478"/>
<dbReference type="KEGG" id="maq:Maqu_2478"/>
<dbReference type="eggNOG" id="COG0027">
    <property type="taxonomic scope" value="Bacteria"/>
</dbReference>
<dbReference type="HOGENOM" id="CLU_011534_1_3_6"/>
<dbReference type="UniPathway" id="UPA00074">
    <property type="reaction ID" value="UER00127"/>
</dbReference>
<dbReference type="Proteomes" id="UP000000998">
    <property type="component" value="Chromosome"/>
</dbReference>
<dbReference type="GO" id="GO:0005829">
    <property type="term" value="C:cytosol"/>
    <property type="evidence" value="ECO:0007669"/>
    <property type="project" value="TreeGrafter"/>
</dbReference>
<dbReference type="GO" id="GO:0005524">
    <property type="term" value="F:ATP binding"/>
    <property type="evidence" value="ECO:0007669"/>
    <property type="project" value="UniProtKB-UniRule"/>
</dbReference>
<dbReference type="GO" id="GO:0000287">
    <property type="term" value="F:magnesium ion binding"/>
    <property type="evidence" value="ECO:0007669"/>
    <property type="project" value="InterPro"/>
</dbReference>
<dbReference type="GO" id="GO:0043815">
    <property type="term" value="F:phosphoribosylglycinamide formyltransferase 2 activity"/>
    <property type="evidence" value="ECO:0007669"/>
    <property type="project" value="UniProtKB-UniRule"/>
</dbReference>
<dbReference type="GO" id="GO:0004644">
    <property type="term" value="F:phosphoribosylglycinamide formyltransferase activity"/>
    <property type="evidence" value="ECO:0007669"/>
    <property type="project" value="InterPro"/>
</dbReference>
<dbReference type="GO" id="GO:0006189">
    <property type="term" value="P:'de novo' IMP biosynthetic process"/>
    <property type="evidence" value="ECO:0007669"/>
    <property type="project" value="UniProtKB-UniRule"/>
</dbReference>
<dbReference type="FunFam" id="3.30.1490.20:FF:000013">
    <property type="entry name" value="Formate-dependent phosphoribosylglycinamide formyltransferase"/>
    <property type="match status" value="1"/>
</dbReference>
<dbReference type="FunFam" id="3.30.470.20:FF:000027">
    <property type="entry name" value="Formate-dependent phosphoribosylglycinamide formyltransferase"/>
    <property type="match status" value="1"/>
</dbReference>
<dbReference type="FunFam" id="3.40.50.20:FF:000007">
    <property type="entry name" value="Formate-dependent phosphoribosylglycinamide formyltransferase"/>
    <property type="match status" value="1"/>
</dbReference>
<dbReference type="Gene3D" id="3.40.50.20">
    <property type="match status" value="1"/>
</dbReference>
<dbReference type="Gene3D" id="3.30.1490.20">
    <property type="entry name" value="ATP-grasp fold, A domain"/>
    <property type="match status" value="1"/>
</dbReference>
<dbReference type="Gene3D" id="3.30.470.20">
    <property type="entry name" value="ATP-grasp fold, B domain"/>
    <property type="match status" value="1"/>
</dbReference>
<dbReference type="HAMAP" id="MF_01643">
    <property type="entry name" value="PurT"/>
    <property type="match status" value="1"/>
</dbReference>
<dbReference type="InterPro" id="IPR011761">
    <property type="entry name" value="ATP-grasp"/>
</dbReference>
<dbReference type="InterPro" id="IPR003135">
    <property type="entry name" value="ATP-grasp_carboxylate-amine"/>
</dbReference>
<dbReference type="InterPro" id="IPR013815">
    <property type="entry name" value="ATP_grasp_subdomain_1"/>
</dbReference>
<dbReference type="InterPro" id="IPR016185">
    <property type="entry name" value="PreATP-grasp_dom_sf"/>
</dbReference>
<dbReference type="InterPro" id="IPR005862">
    <property type="entry name" value="PurT"/>
</dbReference>
<dbReference type="InterPro" id="IPR054350">
    <property type="entry name" value="PurT/PurK_preATP-grasp"/>
</dbReference>
<dbReference type="InterPro" id="IPR048740">
    <property type="entry name" value="PurT_C"/>
</dbReference>
<dbReference type="NCBIfam" id="NF006766">
    <property type="entry name" value="PRK09288.1"/>
    <property type="match status" value="1"/>
</dbReference>
<dbReference type="NCBIfam" id="TIGR01142">
    <property type="entry name" value="purT"/>
    <property type="match status" value="1"/>
</dbReference>
<dbReference type="PANTHER" id="PTHR43055">
    <property type="entry name" value="FORMATE-DEPENDENT PHOSPHORIBOSYLGLYCINAMIDE FORMYLTRANSFERASE"/>
    <property type="match status" value="1"/>
</dbReference>
<dbReference type="PANTHER" id="PTHR43055:SF1">
    <property type="entry name" value="FORMATE-DEPENDENT PHOSPHORIBOSYLGLYCINAMIDE FORMYLTRANSFERASE"/>
    <property type="match status" value="1"/>
</dbReference>
<dbReference type="Pfam" id="PF02222">
    <property type="entry name" value="ATP-grasp"/>
    <property type="match status" value="1"/>
</dbReference>
<dbReference type="Pfam" id="PF21244">
    <property type="entry name" value="PurT_C"/>
    <property type="match status" value="1"/>
</dbReference>
<dbReference type="Pfam" id="PF22660">
    <property type="entry name" value="RS_preATP-grasp-like"/>
    <property type="match status" value="1"/>
</dbReference>
<dbReference type="SUPFAM" id="SSF56059">
    <property type="entry name" value="Glutathione synthetase ATP-binding domain-like"/>
    <property type="match status" value="1"/>
</dbReference>
<dbReference type="SUPFAM" id="SSF52440">
    <property type="entry name" value="PreATP-grasp domain"/>
    <property type="match status" value="1"/>
</dbReference>
<dbReference type="PROSITE" id="PS50975">
    <property type="entry name" value="ATP_GRASP"/>
    <property type="match status" value="1"/>
</dbReference>
<proteinExistence type="inferred from homology"/>
<organism>
    <name type="scientific">Marinobacter nauticus (strain ATCC 700491 / DSM 11845 / VT8)</name>
    <name type="common">Marinobacter aquaeolei</name>
    <dbReference type="NCBI Taxonomy" id="351348"/>
    <lineage>
        <taxon>Bacteria</taxon>
        <taxon>Pseudomonadati</taxon>
        <taxon>Pseudomonadota</taxon>
        <taxon>Gammaproteobacteria</taxon>
        <taxon>Pseudomonadales</taxon>
        <taxon>Marinobacteraceae</taxon>
        <taxon>Marinobacter</taxon>
    </lineage>
</organism>
<gene>
    <name evidence="1" type="primary">purT</name>
    <name type="ordered locus">Maqu_2478</name>
</gene>
<accession>A1U3I4</accession>
<protein>
    <recommendedName>
        <fullName evidence="1">Formate-dependent phosphoribosylglycinamide formyltransferase</fullName>
        <ecNumber evidence="1">6.3.1.21</ecNumber>
    </recommendedName>
    <alternativeName>
        <fullName evidence="1">5'-phosphoribosylglycinamide transformylase 2</fullName>
    </alternativeName>
    <alternativeName>
        <fullName evidence="1">Formate-dependent GAR transformylase</fullName>
    </alternativeName>
    <alternativeName>
        <fullName evidence="1">GAR transformylase 2</fullName>
        <shortName evidence="1">GART 2</shortName>
    </alternativeName>
    <alternativeName>
        <fullName evidence="1">Non-folate glycinamide ribonucleotide transformylase</fullName>
    </alternativeName>
    <alternativeName>
        <fullName evidence="1">Phosphoribosylglycinamide formyltransferase 2</fullName>
    </alternativeName>
</protein>